<dbReference type="EC" id="2.7.1.144" evidence="1"/>
<dbReference type="EMBL" id="AM946015">
    <property type="protein sequence ID" value="CAR41797.1"/>
    <property type="molecule type" value="Genomic_DNA"/>
</dbReference>
<dbReference type="RefSeq" id="WP_012658307.1">
    <property type="nucleotide sequence ID" value="NC_012004.1"/>
</dbReference>
<dbReference type="SMR" id="B9DU93"/>
<dbReference type="STRING" id="218495.SUB0795"/>
<dbReference type="KEGG" id="sub:SUB0795"/>
<dbReference type="eggNOG" id="COG1105">
    <property type="taxonomic scope" value="Bacteria"/>
</dbReference>
<dbReference type="HOGENOM" id="CLU_050013_5_0_9"/>
<dbReference type="OrthoDB" id="9801219at2"/>
<dbReference type="UniPathway" id="UPA00704">
    <property type="reaction ID" value="UER00715"/>
</dbReference>
<dbReference type="Proteomes" id="UP000000449">
    <property type="component" value="Chromosome"/>
</dbReference>
<dbReference type="GO" id="GO:0005829">
    <property type="term" value="C:cytosol"/>
    <property type="evidence" value="ECO:0007669"/>
    <property type="project" value="TreeGrafter"/>
</dbReference>
<dbReference type="GO" id="GO:0005524">
    <property type="term" value="F:ATP binding"/>
    <property type="evidence" value="ECO:0007669"/>
    <property type="project" value="UniProtKB-KW"/>
</dbReference>
<dbReference type="GO" id="GO:0008443">
    <property type="term" value="F:phosphofructokinase activity"/>
    <property type="evidence" value="ECO:0007669"/>
    <property type="project" value="TreeGrafter"/>
</dbReference>
<dbReference type="GO" id="GO:0009024">
    <property type="term" value="F:tagatose-6-phosphate kinase activity"/>
    <property type="evidence" value="ECO:0007669"/>
    <property type="project" value="UniProtKB-UniRule"/>
</dbReference>
<dbReference type="GO" id="GO:2001059">
    <property type="term" value="P:D-tagatose 6-phosphate catabolic process"/>
    <property type="evidence" value="ECO:0007669"/>
    <property type="project" value="UniProtKB-UniRule"/>
</dbReference>
<dbReference type="GO" id="GO:0019512">
    <property type="term" value="P:lactose catabolic process via tagatose-6-phosphate"/>
    <property type="evidence" value="ECO:0007669"/>
    <property type="project" value="InterPro"/>
</dbReference>
<dbReference type="CDD" id="cd01164">
    <property type="entry name" value="FruK_PfkB_like"/>
    <property type="match status" value="1"/>
</dbReference>
<dbReference type="FunFam" id="3.40.1190.20:FF:000001">
    <property type="entry name" value="Phosphofructokinase"/>
    <property type="match status" value="1"/>
</dbReference>
<dbReference type="Gene3D" id="3.40.1190.20">
    <property type="match status" value="1"/>
</dbReference>
<dbReference type="HAMAP" id="MF_01557">
    <property type="entry name" value="LacC"/>
    <property type="match status" value="1"/>
</dbReference>
<dbReference type="InterPro" id="IPR002173">
    <property type="entry name" value="Carboh/pur_kinase_PfkB_CS"/>
</dbReference>
<dbReference type="InterPro" id="IPR005926">
    <property type="entry name" value="LacC"/>
</dbReference>
<dbReference type="InterPro" id="IPR011611">
    <property type="entry name" value="PfkB_dom"/>
</dbReference>
<dbReference type="InterPro" id="IPR029056">
    <property type="entry name" value="Ribokinase-like"/>
</dbReference>
<dbReference type="InterPro" id="IPR017583">
    <property type="entry name" value="Tagatose/fructose_Pkinase"/>
</dbReference>
<dbReference type="NCBIfam" id="TIGR03168">
    <property type="entry name" value="1-PFK"/>
    <property type="match status" value="1"/>
</dbReference>
<dbReference type="NCBIfam" id="TIGR01231">
    <property type="entry name" value="lacC"/>
    <property type="match status" value="1"/>
</dbReference>
<dbReference type="NCBIfam" id="NF010033">
    <property type="entry name" value="PRK13508.1"/>
    <property type="match status" value="1"/>
</dbReference>
<dbReference type="PANTHER" id="PTHR46566:SF5">
    <property type="entry name" value="1-PHOSPHOFRUCTOKINASE"/>
    <property type="match status" value="1"/>
</dbReference>
<dbReference type="PANTHER" id="PTHR46566">
    <property type="entry name" value="1-PHOSPHOFRUCTOKINASE-RELATED"/>
    <property type="match status" value="1"/>
</dbReference>
<dbReference type="Pfam" id="PF00294">
    <property type="entry name" value="PfkB"/>
    <property type="match status" value="1"/>
</dbReference>
<dbReference type="PIRSF" id="PIRSF000535">
    <property type="entry name" value="1PFK/6PFK/LacC"/>
    <property type="match status" value="1"/>
</dbReference>
<dbReference type="SUPFAM" id="SSF53613">
    <property type="entry name" value="Ribokinase-like"/>
    <property type="match status" value="1"/>
</dbReference>
<dbReference type="PROSITE" id="PS00583">
    <property type="entry name" value="PFKB_KINASES_1"/>
    <property type="match status" value="1"/>
</dbReference>
<dbReference type="PROSITE" id="PS00584">
    <property type="entry name" value="PFKB_KINASES_2"/>
    <property type="match status" value="1"/>
</dbReference>
<protein>
    <recommendedName>
        <fullName evidence="1">Tagatose-6-phosphate kinase</fullName>
        <ecNumber evidence="1">2.7.1.144</ecNumber>
    </recommendedName>
    <alternativeName>
        <fullName evidence="1">Phosphotagatokinase</fullName>
    </alternativeName>
</protein>
<gene>
    <name evidence="1" type="primary">lacC</name>
    <name type="ordered locus">SUB0795</name>
</gene>
<reference key="1">
    <citation type="journal article" date="2009" name="BMC Genomics">
        <title>Evidence for niche adaptation in the genome of the bovine pathogen Streptococcus uberis.</title>
        <authorList>
            <person name="Ward P.N."/>
            <person name="Holden M.T.G."/>
            <person name="Leigh J.A."/>
            <person name="Lennard N."/>
            <person name="Bignell A."/>
            <person name="Barron A."/>
            <person name="Clark L."/>
            <person name="Quail M.A."/>
            <person name="Woodward J."/>
            <person name="Barrell B.G."/>
            <person name="Egan S.A."/>
            <person name="Field T.R."/>
            <person name="Maskell D."/>
            <person name="Kehoe M."/>
            <person name="Dowson C.G."/>
            <person name="Chanter N."/>
            <person name="Whatmore A.M."/>
            <person name="Bentley S.D."/>
            <person name="Parkhill J."/>
        </authorList>
    </citation>
    <scope>NUCLEOTIDE SEQUENCE [LARGE SCALE GENOMIC DNA]</scope>
    <source>
        <strain>ATCC BAA-854 / 0140J</strain>
    </source>
</reference>
<evidence type="ECO:0000255" key="1">
    <source>
        <dbReference type="HAMAP-Rule" id="MF_01557"/>
    </source>
</evidence>
<name>LACC_STRU0</name>
<feature type="chain" id="PRO_1000185410" description="Tagatose-6-phosphate kinase">
    <location>
        <begin position="1"/>
        <end position="310"/>
    </location>
</feature>
<accession>B9DU93</accession>
<proteinExistence type="inferred from homology"/>
<keyword id="KW-0067">ATP-binding</keyword>
<keyword id="KW-0418">Kinase</keyword>
<keyword id="KW-0423">Lactose metabolism</keyword>
<keyword id="KW-0547">Nucleotide-binding</keyword>
<keyword id="KW-1185">Reference proteome</keyword>
<keyword id="KW-0808">Transferase</keyword>
<sequence length="310" mass="33714">MILTVTMNPSVDIAYQLDVFNLDTVNRVAETHKTPGGKGLNVTRVLSQVGDDVLATGLLGGKIGEFIQKELDQVGIEHDFSPISGETRNCIAILHEGQQTEILESGPTISDEEGKVFLEHFESLVKQVSIISISGSLPKGLPVDFYSKMIEICERYQKPVVLDCSGQALLEVLKGHAKPTVIKPNTEELSQLLNMEVTSDTSVLKAALDQDLFDGVEWVIVSLGSKGAFAKHIDSYYQVTIPKIEVVNPVGSGDSTVAGITSALYHAESDEELLKKANCLGMLNAQEKQTGHVNMANYSALFERIKVEEV</sequence>
<organism>
    <name type="scientific">Streptococcus uberis (strain ATCC BAA-854 / 0140J)</name>
    <dbReference type="NCBI Taxonomy" id="218495"/>
    <lineage>
        <taxon>Bacteria</taxon>
        <taxon>Bacillati</taxon>
        <taxon>Bacillota</taxon>
        <taxon>Bacilli</taxon>
        <taxon>Lactobacillales</taxon>
        <taxon>Streptococcaceae</taxon>
        <taxon>Streptococcus</taxon>
    </lineage>
</organism>
<comment type="catalytic activity">
    <reaction evidence="1">
        <text>D-tagatofuranose 6-phosphate + ATP = D-tagatofuranose 1,6-bisphosphate + ADP + H(+)</text>
        <dbReference type="Rhea" id="RHEA:12420"/>
        <dbReference type="ChEBI" id="CHEBI:15378"/>
        <dbReference type="ChEBI" id="CHEBI:30616"/>
        <dbReference type="ChEBI" id="CHEBI:58694"/>
        <dbReference type="ChEBI" id="CHEBI:58695"/>
        <dbReference type="ChEBI" id="CHEBI:456216"/>
        <dbReference type="EC" id="2.7.1.144"/>
    </reaction>
</comment>
<comment type="pathway">
    <text evidence="1">Carbohydrate metabolism; D-tagatose 6-phosphate degradation; D-glyceraldehyde 3-phosphate and glycerone phosphate from D-tagatose 6-phosphate: step 1/2.</text>
</comment>
<comment type="similarity">
    <text evidence="1">Belongs to the carbohydrate kinase PfkB family. LacC subfamily.</text>
</comment>